<reference key="1">
    <citation type="journal article" date="2004" name="Proc. Natl. Acad. Sci. U.S.A.">
        <title>Genome sequence of the enterobacterial phytopathogen Erwinia carotovora subsp. atroseptica and characterization of virulence factors.</title>
        <authorList>
            <person name="Bell K.S."/>
            <person name="Sebaihia M."/>
            <person name="Pritchard L."/>
            <person name="Holden M.T.G."/>
            <person name="Hyman L.J."/>
            <person name="Holeva M.C."/>
            <person name="Thomson N.R."/>
            <person name="Bentley S.D."/>
            <person name="Churcher L.J.C."/>
            <person name="Mungall K."/>
            <person name="Atkin R."/>
            <person name="Bason N."/>
            <person name="Brooks K."/>
            <person name="Chillingworth T."/>
            <person name="Clark K."/>
            <person name="Doggett J."/>
            <person name="Fraser A."/>
            <person name="Hance Z."/>
            <person name="Hauser H."/>
            <person name="Jagels K."/>
            <person name="Moule S."/>
            <person name="Norbertczak H."/>
            <person name="Ormond D."/>
            <person name="Price C."/>
            <person name="Quail M.A."/>
            <person name="Sanders M."/>
            <person name="Walker D."/>
            <person name="Whitehead S."/>
            <person name="Salmond G.P.C."/>
            <person name="Birch P.R.J."/>
            <person name="Parkhill J."/>
            <person name="Toth I.K."/>
        </authorList>
    </citation>
    <scope>NUCLEOTIDE SEQUENCE [LARGE SCALE GENOMIC DNA]</scope>
    <source>
        <strain>SCRI 1043 / ATCC BAA-672</strain>
    </source>
</reference>
<name>FBPC2_PECAS</name>
<proteinExistence type="inferred from homology"/>
<protein>
    <recommendedName>
        <fullName evidence="1">Fe(3+) ions import ATP-binding protein FbpC 2</fullName>
        <ecNumber evidence="1">7.2.2.7</ecNumber>
    </recommendedName>
</protein>
<gene>
    <name evidence="1" type="primary">fbpC2</name>
    <name type="synonym">afuC2</name>
    <name type="ordered locus">ECA3139</name>
</gene>
<keyword id="KW-0067">ATP-binding</keyword>
<keyword id="KW-0997">Cell inner membrane</keyword>
<keyword id="KW-1003">Cell membrane</keyword>
<keyword id="KW-0406">Ion transport</keyword>
<keyword id="KW-0408">Iron</keyword>
<keyword id="KW-0410">Iron transport</keyword>
<keyword id="KW-0472">Membrane</keyword>
<keyword id="KW-0547">Nucleotide-binding</keyword>
<keyword id="KW-1185">Reference proteome</keyword>
<keyword id="KW-1278">Translocase</keyword>
<keyword id="KW-0813">Transport</keyword>
<feature type="chain" id="PRO_0000092350" description="Fe(3+) ions import ATP-binding protein FbpC 2">
    <location>
        <begin position="1"/>
        <end position="346"/>
    </location>
</feature>
<feature type="domain" description="ABC transporter" evidence="1">
    <location>
        <begin position="2"/>
        <end position="234"/>
    </location>
</feature>
<feature type="binding site" evidence="1">
    <location>
        <begin position="34"/>
        <end position="41"/>
    </location>
    <ligand>
        <name>ATP</name>
        <dbReference type="ChEBI" id="CHEBI:30616"/>
    </ligand>
</feature>
<dbReference type="EC" id="7.2.2.7" evidence="1"/>
<dbReference type="EMBL" id="BX950851">
    <property type="protein sequence ID" value="CAG76038.1"/>
    <property type="molecule type" value="Genomic_DNA"/>
</dbReference>
<dbReference type="RefSeq" id="WP_011094662.1">
    <property type="nucleotide sequence ID" value="NC_004547.2"/>
</dbReference>
<dbReference type="SMR" id="Q6D2F6"/>
<dbReference type="STRING" id="218491.ECA3139"/>
<dbReference type="KEGG" id="eca:ECA3139"/>
<dbReference type="PATRIC" id="fig|218491.5.peg.3176"/>
<dbReference type="eggNOG" id="COG3842">
    <property type="taxonomic scope" value="Bacteria"/>
</dbReference>
<dbReference type="HOGENOM" id="CLU_000604_1_1_6"/>
<dbReference type="OrthoDB" id="9802264at2"/>
<dbReference type="Proteomes" id="UP000007966">
    <property type="component" value="Chromosome"/>
</dbReference>
<dbReference type="GO" id="GO:0043190">
    <property type="term" value="C:ATP-binding cassette (ABC) transporter complex"/>
    <property type="evidence" value="ECO:0007669"/>
    <property type="project" value="InterPro"/>
</dbReference>
<dbReference type="GO" id="GO:0015408">
    <property type="term" value="F:ABC-type ferric iron transporter activity"/>
    <property type="evidence" value="ECO:0007669"/>
    <property type="project" value="UniProtKB-EC"/>
</dbReference>
<dbReference type="GO" id="GO:0005524">
    <property type="term" value="F:ATP binding"/>
    <property type="evidence" value="ECO:0007669"/>
    <property type="project" value="UniProtKB-KW"/>
</dbReference>
<dbReference type="GO" id="GO:0016887">
    <property type="term" value="F:ATP hydrolysis activity"/>
    <property type="evidence" value="ECO:0007669"/>
    <property type="project" value="InterPro"/>
</dbReference>
<dbReference type="CDD" id="cd03259">
    <property type="entry name" value="ABC_Carb_Solutes_like"/>
    <property type="match status" value="1"/>
</dbReference>
<dbReference type="FunFam" id="3.40.50.300:FF:000425">
    <property type="entry name" value="Probable ABC transporter, ATP-binding subunit"/>
    <property type="match status" value="1"/>
</dbReference>
<dbReference type="Gene3D" id="2.40.50.450">
    <property type="match status" value="1"/>
</dbReference>
<dbReference type="Gene3D" id="3.40.50.300">
    <property type="entry name" value="P-loop containing nucleotide triphosphate hydrolases"/>
    <property type="match status" value="1"/>
</dbReference>
<dbReference type="InterPro" id="IPR003593">
    <property type="entry name" value="AAA+_ATPase"/>
</dbReference>
<dbReference type="InterPro" id="IPR050093">
    <property type="entry name" value="ABC_SmlMolc_Importer"/>
</dbReference>
<dbReference type="InterPro" id="IPR003439">
    <property type="entry name" value="ABC_transporter-like_ATP-bd"/>
</dbReference>
<dbReference type="InterPro" id="IPR017871">
    <property type="entry name" value="ABC_transporter-like_CS"/>
</dbReference>
<dbReference type="InterPro" id="IPR015853">
    <property type="entry name" value="ABC_transpr_FbpC"/>
</dbReference>
<dbReference type="InterPro" id="IPR008995">
    <property type="entry name" value="Mo/tungstate-bd_C_term_dom"/>
</dbReference>
<dbReference type="InterPro" id="IPR027417">
    <property type="entry name" value="P-loop_NTPase"/>
</dbReference>
<dbReference type="InterPro" id="IPR013611">
    <property type="entry name" value="Transp-assoc_OB_typ2"/>
</dbReference>
<dbReference type="PANTHER" id="PTHR42781">
    <property type="entry name" value="SPERMIDINE/PUTRESCINE IMPORT ATP-BINDING PROTEIN POTA"/>
    <property type="match status" value="1"/>
</dbReference>
<dbReference type="PANTHER" id="PTHR42781:SF4">
    <property type="entry name" value="SPERMIDINE_PUTRESCINE IMPORT ATP-BINDING PROTEIN POTA"/>
    <property type="match status" value="1"/>
</dbReference>
<dbReference type="Pfam" id="PF00005">
    <property type="entry name" value="ABC_tran"/>
    <property type="match status" value="1"/>
</dbReference>
<dbReference type="Pfam" id="PF08402">
    <property type="entry name" value="TOBE_2"/>
    <property type="match status" value="1"/>
</dbReference>
<dbReference type="SMART" id="SM00382">
    <property type="entry name" value="AAA"/>
    <property type="match status" value="1"/>
</dbReference>
<dbReference type="SUPFAM" id="SSF50331">
    <property type="entry name" value="MOP-like"/>
    <property type="match status" value="1"/>
</dbReference>
<dbReference type="SUPFAM" id="SSF52540">
    <property type="entry name" value="P-loop containing nucleoside triphosphate hydrolases"/>
    <property type="match status" value="1"/>
</dbReference>
<dbReference type="PROSITE" id="PS00211">
    <property type="entry name" value="ABC_TRANSPORTER_1"/>
    <property type="match status" value="1"/>
</dbReference>
<dbReference type="PROSITE" id="PS50893">
    <property type="entry name" value="ABC_TRANSPORTER_2"/>
    <property type="match status" value="1"/>
</dbReference>
<dbReference type="PROSITE" id="PS51242">
    <property type="entry name" value="FBPC"/>
    <property type="match status" value="1"/>
</dbReference>
<comment type="function">
    <text evidence="1">Part of the ABC transporter complex FbpABC involved in Fe(3+) ions import. Responsible for energy coupling to the transport system.</text>
</comment>
<comment type="catalytic activity">
    <reaction evidence="1">
        <text>Fe(3+)(out) + ATP + H2O = Fe(3+)(in) + ADP + phosphate + H(+)</text>
        <dbReference type="Rhea" id="RHEA:12332"/>
        <dbReference type="ChEBI" id="CHEBI:15377"/>
        <dbReference type="ChEBI" id="CHEBI:15378"/>
        <dbReference type="ChEBI" id="CHEBI:29034"/>
        <dbReference type="ChEBI" id="CHEBI:30616"/>
        <dbReference type="ChEBI" id="CHEBI:43474"/>
        <dbReference type="ChEBI" id="CHEBI:456216"/>
        <dbReference type="EC" id="7.2.2.7"/>
    </reaction>
</comment>
<comment type="subunit">
    <text evidence="1">The complex is composed of two ATP-binding proteins (FbpC), two transmembrane proteins (FbpB) and a solute-binding protein (FbpA).</text>
</comment>
<comment type="subcellular location">
    <subcellularLocation>
        <location evidence="1">Cell inner membrane</location>
        <topology evidence="1">Peripheral membrane protein</topology>
    </subcellularLocation>
</comment>
<comment type="similarity">
    <text evidence="1">Belongs to the ABC transporter superfamily. Fe(3+) ion importer (TC 3.A.1.10) family.</text>
</comment>
<accession>Q6D2F6</accession>
<sequence length="346" mass="37468">MLELHRVSKSFNGRTVLSDIHLTLENSRRTAIVGPSGSGKTTLLRLIAGFETPDTGVITLNGQTLCDNGFSVPAHQRRIGYVPQDGALFPHLCIADNIAFGLKGSKAEKQKRVDELMALVSLPTHLQKHSPHEISGGQQQRVALARALAQRPALMLLDEPFSALDTGLRAATRKAVMDVLQQANVASILVTHDQGEALSFADRVVVMREGQLSQSGSPWALYHQPNSEDIATFLGETLILNAQIDGGKADCLLGRIAVDRPTANGRVRIMLRPEQITIQDTEITSTAHMRATIRNVEFSGFVSTLTLRIHNAEADVIELKTVSHAAFIVGQQVSLSVNGAAHVFSQ</sequence>
<evidence type="ECO:0000255" key="1">
    <source>
        <dbReference type="HAMAP-Rule" id="MF_01706"/>
    </source>
</evidence>
<organism>
    <name type="scientific">Pectobacterium atrosepticum (strain SCRI 1043 / ATCC BAA-672)</name>
    <name type="common">Erwinia carotovora subsp. atroseptica</name>
    <dbReference type="NCBI Taxonomy" id="218491"/>
    <lineage>
        <taxon>Bacteria</taxon>
        <taxon>Pseudomonadati</taxon>
        <taxon>Pseudomonadota</taxon>
        <taxon>Gammaproteobacteria</taxon>
        <taxon>Enterobacterales</taxon>
        <taxon>Pectobacteriaceae</taxon>
        <taxon>Pectobacterium</taxon>
    </lineage>
</organism>